<gene>
    <name type="ordered locus">M28_Spy1781</name>
</gene>
<feature type="chain" id="PRO_0000216994" description="UPF0297 protein M28_Spy1781">
    <location>
        <begin position="1"/>
        <end position="89"/>
    </location>
</feature>
<dbReference type="EMBL" id="CP000056">
    <property type="protein sequence ID" value="AAX72891.1"/>
    <property type="molecule type" value="Genomic_DNA"/>
</dbReference>
<dbReference type="RefSeq" id="WP_002982194.1">
    <property type="nucleotide sequence ID" value="NC_007296.2"/>
</dbReference>
<dbReference type="SMR" id="Q48QW9"/>
<dbReference type="KEGG" id="spb:M28_Spy1781"/>
<dbReference type="HOGENOM" id="CLU_162466_0_0_9"/>
<dbReference type="HAMAP" id="MF_01507">
    <property type="entry name" value="UPF0297"/>
    <property type="match status" value="1"/>
</dbReference>
<dbReference type="InterPro" id="IPR009309">
    <property type="entry name" value="IreB"/>
</dbReference>
<dbReference type="NCBIfam" id="NF003997">
    <property type="entry name" value="PRK05473.1"/>
    <property type="match status" value="1"/>
</dbReference>
<dbReference type="PANTHER" id="PTHR40067">
    <property type="entry name" value="UPF0297 PROTEIN YRZL"/>
    <property type="match status" value="1"/>
</dbReference>
<dbReference type="PANTHER" id="PTHR40067:SF1">
    <property type="entry name" value="UPF0297 PROTEIN YRZL"/>
    <property type="match status" value="1"/>
</dbReference>
<dbReference type="Pfam" id="PF06135">
    <property type="entry name" value="IreB"/>
    <property type="match status" value="1"/>
</dbReference>
<dbReference type="PIRSF" id="PIRSF037258">
    <property type="entry name" value="DUF965_bac"/>
    <property type="match status" value="1"/>
</dbReference>
<name>Y1781_STRPM</name>
<accession>Q48QW9</accession>
<comment type="similarity">
    <text evidence="1">Belongs to the UPF0297 family.</text>
</comment>
<proteinExistence type="inferred from homology"/>
<sequence>MGFTDETVRFKLDDGDKRQISETLTAVYHSLDEKGYNPINQIVGYVLSGDPAYVPRYNDARNQIRKYERDEIVEELVRYYLQGNGIDVK</sequence>
<evidence type="ECO:0000255" key="1">
    <source>
        <dbReference type="HAMAP-Rule" id="MF_01507"/>
    </source>
</evidence>
<protein>
    <recommendedName>
        <fullName evidence="1">UPF0297 protein M28_Spy1781</fullName>
    </recommendedName>
</protein>
<reference key="1">
    <citation type="journal article" date="2005" name="J. Infect. Dis.">
        <title>Genome sequence of a serotype M28 strain of group A Streptococcus: potential new insights into puerperal sepsis and bacterial disease specificity.</title>
        <authorList>
            <person name="Green N.M."/>
            <person name="Zhang S."/>
            <person name="Porcella S.F."/>
            <person name="Nagiec M.J."/>
            <person name="Barbian K.D."/>
            <person name="Beres S.B."/>
            <person name="Lefebvre R.B."/>
            <person name="Musser J.M."/>
        </authorList>
    </citation>
    <scope>NUCLEOTIDE SEQUENCE [LARGE SCALE GENOMIC DNA]</scope>
    <source>
        <strain>MGAS6180</strain>
    </source>
</reference>
<organism>
    <name type="scientific">Streptococcus pyogenes serotype M28 (strain MGAS6180)</name>
    <dbReference type="NCBI Taxonomy" id="319701"/>
    <lineage>
        <taxon>Bacteria</taxon>
        <taxon>Bacillati</taxon>
        <taxon>Bacillota</taxon>
        <taxon>Bacilli</taxon>
        <taxon>Lactobacillales</taxon>
        <taxon>Streptococcaceae</taxon>
        <taxon>Streptococcus</taxon>
    </lineage>
</organism>